<evidence type="ECO:0000255" key="1">
    <source>
        <dbReference type="HAMAP-Rule" id="MF_01307"/>
    </source>
</evidence>
<evidence type="ECO:0000305" key="2"/>
<feature type="chain" id="PRO_0000323087" description="Small ribosomal subunit protein uS5">
    <location>
        <begin position="1"/>
        <end position="172"/>
    </location>
</feature>
<feature type="domain" description="S5 DRBM" evidence="1">
    <location>
        <begin position="17"/>
        <end position="80"/>
    </location>
</feature>
<gene>
    <name evidence="1" type="primary">rpsE</name>
    <name type="ordered locus">BMA10229_A1941</name>
</gene>
<comment type="function">
    <text evidence="1">With S4 and S12 plays an important role in translational accuracy.</text>
</comment>
<comment type="function">
    <text evidence="1">Located at the back of the 30S subunit body where it stabilizes the conformation of the head with respect to the body.</text>
</comment>
<comment type="subunit">
    <text evidence="1">Part of the 30S ribosomal subunit. Contacts proteins S4 and S8.</text>
</comment>
<comment type="domain">
    <text>The N-terminal domain interacts with the head of the 30S subunit; the C-terminal domain interacts with the body and contacts protein S4. The interaction surface between S4 and S5 is involved in control of translational fidelity.</text>
</comment>
<comment type="similarity">
    <text evidence="1">Belongs to the universal ribosomal protein uS5 family.</text>
</comment>
<organism>
    <name type="scientific">Burkholderia mallei (strain NCTC 10229)</name>
    <dbReference type="NCBI Taxonomy" id="412022"/>
    <lineage>
        <taxon>Bacteria</taxon>
        <taxon>Pseudomonadati</taxon>
        <taxon>Pseudomonadota</taxon>
        <taxon>Betaproteobacteria</taxon>
        <taxon>Burkholderiales</taxon>
        <taxon>Burkholderiaceae</taxon>
        <taxon>Burkholderia</taxon>
        <taxon>pseudomallei group</taxon>
    </lineage>
</organism>
<dbReference type="EMBL" id="CP000546">
    <property type="protein sequence ID" value="ABN03813.1"/>
    <property type="molecule type" value="Genomic_DNA"/>
</dbReference>
<dbReference type="RefSeq" id="WP_004197945.1">
    <property type="nucleotide sequence ID" value="NC_008836.1"/>
</dbReference>
<dbReference type="SMR" id="A2S7J3"/>
<dbReference type="GeneID" id="93126536"/>
<dbReference type="KEGG" id="bml:BMA10229_A1941"/>
<dbReference type="HOGENOM" id="CLU_065898_2_2_4"/>
<dbReference type="Proteomes" id="UP000002283">
    <property type="component" value="Chromosome I"/>
</dbReference>
<dbReference type="GO" id="GO:0015935">
    <property type="term" value="C:small ribosomal subunit"/>
    <property type="evidence" value="ECO:0007669"/>
    <property type="project" value="InterPro"/>
</dbReference>
<dbReference type="GO" id="GO:0019843">
    <property type="term" value="F:rRNA binding"/>
    <property type="evidence" value="ECO:0007669"/>
    <property type="project" value="UniProtKB-UniRule"/>
</dbReference>
<dbReference type="GO" id="GO:0003735">
    <property type="term" value="F:structural constituent of ribosome"/>
    <property type="evidence" value="ECO:0007669"/>
    <property type="project" value="InterPro"/>
</dbReference>
<dbReference type="GO" id="GO:0006412">
    <property type="term" value="P:translation"/>
    <property type="evidence" value="ECO:0007669"/>
    <property type="project" value="UniProtKB-UniRule"/>
</dbReference>
<dbReference type="FunFam" id="3.30.160.20:FF:000001">
    <property type="entry name" value="30S ribosomal protein S5"/>
    <property type="match status" value="1"/>
</dbReference>
<dbReference type="FunFam" id="3.30.230.10:FF:000002">
    <property type="entry name" value="30S ribosomal protein S5"/>
    <property type="match status" value="1"/>
</dbReference>
<dbReference type="Gene3D" id="3.30.160.20">
    <property type="match status" value="1"/>
</dbReference>
<dbReference type="Gene3D" id="3.30.230.10">
    <property type="match status" value="1"/>
</dbReference>
<dbReference type="HAMAP" id="MF_01307_B">
    <property type="entry name" value="Ribosomal_uS5_B"/>
    <property type="match status" value="1"/>
</dbReference>
<dbReference type="InterPro" id="IPR020568">
    <property type="entry name" value="Ribosomal_Su5_D2-typ_SF"/>
</dbReference>
<dbReference type="InterPro" id="IPR000851">
    <property type="entry name" value="Ribosomal_uS5"/>
</dbReference>
<dbReference type="InterPro" id="IPR005712">
    <property type="entry name" value="Ribosomal_uS5_bac-type"/>
</dbReference>
<dbReference type="InterPro" id="IPR005324">
    <property type="entry name" value="Ribosomal_uS5_C"/>
</dbReference>
<dbReference type="InterPro" id="IPR013810">
    <property type="entry name" value="Ribosomal_uS5_N"/>
</dbReference>
<dbReference type="InterPro" id="IPR018192">
    <property type="entry name" value="Ribosomal_uS5_N_CS"/>
</dbReference>
<dbReference type="InterPro" id="IPR014721">
    <property type="entry name" value="Ribsml_uS5_D2-typ_fold_subgr"/>
</dbReference>
<dbReference type="NCBIfam" id="TIGR01021">
    <property type="entry name" value="rpsE_bact"/>
    <property type="match status" value="1"/>
</dbReference>
<dbReference type="PANTHER" id="PTHR48277">
    <property type="entry name" value="MITOCHONDRIAL RIBOSOMAL PROTEIN S5"/>
    <property type="match status" value="1"/>
</dbReference>
<dbReference type="PANTHER" id="PTHR48277:SF1">
    <property type="entry name" value="MITOCHONDRIAL RIBOSOMAL PROTEIN S5"/>
    <property type="match status" value="1"/>
</dbReference>
<dbReference type="Pfam" id="PF00333">
    <property type="entry name" value="Ribosomal_S5"/>
    <property type="match status" value="1"/>
</dbReference>
<dbReference type="Pfam" id="PF03719">
    <property type="entry name" value="Ribosomal_S5_C"/>
    <property type="match status" value="1"/>
</dbReference>
<dbReference type="SUPFAM" id="SSF54768">
    <property type="entry name" value="dsRNA-binding domain-like"/>
    <property type="match status" value="1"/>
</dbReference>
<dbReference type="SUPFAM" id="SSF54211">
    <property type="entry name" value="Ribosomal protein S5 domain 2-like"/>
    <property type="match status" value="1"/>
</dbReference>
<dbReference type="PROSITE" id="PS00585">
    <property type="entry name" value="RIBOSOMAL_S5"/>
    <property type="match status" value="1"/>
</dbReference>
<dbReference type="PROSITE" id="PS50881">
    <property type="entry name" value="S5_DSRBD"/>
    <property type="match status" value="1"/>
</dbReference>
<accession>A2S7J3</accession>
<keyword id="KW-0687">Ribonucleoprotein</keyword>
<keyword id="KW-0689">Ribosomal protein</keyword>
<keyword id="KW-0694">RNA-binding</keyword>
<keyword id="KW-0699">rRNA-binding</keyword>
<proteinExistence type="inferred from homology"/>
<reference key="1">
    <citation type="journal article" date="2010" name="Genome Biol. Evol.">
        <title>Continuing evolution of Burkholderia mallei through genome reduction and large-scale rearrangements.</title>
        <authorList>
            <person name="Losada L."/>
            <person name="Ronning C.M."/>
            <person name="DeShazer D."/>
            <person name="Woods D."/>
            <person name="Fedorova N."/>
            <person name="Kim H.S."/>
            <person name="Shabalina S.A."/>
            <person name="Pearson T.R."/>
            <person name="Brinkac L."/>
            <person name="Tan P."/>
            <person name="Nandi T."/>
            <person name="Crabtree J."/>
            <person name="Badger J."/>
            <person name="Beckstrom-Sternberg S."/>
            <person name="Saqib M."/>
            <person name="Schutzer S.E."/>
            <person name="Keim P."/>
            <person name="Nierman W.C."/>
        </authorList>
    </citation>
    <scope>NUCLEOTIDE SEQUENCE [LARGE SCALE GENOMIC DNA]</scope>
    <source>
        <strain>NCTC 10229</strain>
    </source>
</reference>
<name>RS5_BURM9</name>
<sequence length="172" mass="18150">MAKMQAKVQADERDDGLREKMISVNRVTKVVKGGRILGFAALTVVGDGDGRVGMGKGKAKEVPVAVQKAMEQARRNMFKVPLKNGTLQHEVHGKHGASTVLLAPAKDGTGVIAGGPMRAVFDVMGVQNVVAKSHGSTNPYNLVRATLDGLRKQSTPADIAAKRGKSVEEILG</sequence>
<protein>
    <recommendedName>
        <fullName evidence="1">Small ribosomal subunit protein uS5</fullName>
    </recommendedName>
    <alternativeName>
        <fullName evidence="2">30S ribosomal protein S5</fullName>
    </alternativeName>
</protein>